<accession>Q9C7B1</accession>
<accession>Q5QKS3</accession>
<accession>Q9LHB0</accession>
<organism>
    <name type="scientific">Arabidopsis thaliana</name>
    <name type="common">Mouse-ear cress</name>
    <dbReference type="NCBI Taxonomy" id="3702"/>
    <lineage>
        <taxon>Eukaryota</taxon>
        <taxon>Viridiplantae</taxon>
        <taxon>Streptophyta</taxon>
        <taxon>Embryophyta</taxon>
        <taxon>Tracheophyta</taxon>
        <taxon>Spermatophyta</taxon>
        <taxon>Magnoliopsida</taxon>
        <taxon>eudicotyledons</taxon>
        <taxon>Gunneridae</taxon>
        <taxon>Pentapetalae</taxon>
        <taxon>rosids</taxon>
        <taxon>malvids</taxon>
        <taxon>Brassicales</taxon>
        <taxon>Brassicaceae</taxon>
        <taxon>Camelineae</taxon>
        <taxon>Arabidopsis</taxon>
    </lineage>
</organism>
<protein>
    <recommendedName>
        <fullName>Telomere repeat-binding protein 3</fullName>
    </recommendedName>
    <alternativeName>
        <fullName>Protein TRF-LIKE 9</fullName>
    </alternativeName>
    <alternativeName>
        <fullName>Telomeric DNA-binding protein 2</fullName>
        <shortName>AtTBP2</shortName>
    </alternativeName>
</protein>
<feature type="chain" id="PRO_0000394126" description="Telomere repeat-binding protein 3">
    <location>
        <begin position="1"/>
        <end position="619"/>
    </location>
</feature>
<feature type="domain" description="Ubiquitin-like">
    <location>
        <begin position="324"/>
        <end position="403"/>
    </location>
</feature>
<feature type="domain" description="HTH myb-type" evidence="1">
    <location>
        <begin position="504"/>
        <end position="563"/>
    </location>
</feature>
<feature type="DNA-binding region" description="H-T-H motif" evidence="1">
    <location>
        <begin position="532"/>
        <end position="559"/>
    </location>
</feature>
<feature type="region of interest" description="Disordered" evidence="2">
    <location>
        <begin position="593"/>
        <end position="619"/>
    </location>
</feature>
<feature type="sequence conflict" description="In Ref. 1; AAO61583." evidence="5" ref="1">
    <original>E</original>
    <variation>G</variation>
    <location>
        <position position="402"/>
    </location>
</feature>
<feature type="sequence conflict" description="In Ref. 1; AAO61583." evidence="5" ref="1">
    <original>T</original>
    <variation>A</variation>
    <location>
        <position position="529"/>
    </location>
</feature>
<keyword id="KW-0238">DNA-binding</keyword>
<keyword id="KW-0539">Nucleus</keyword>
<keyword id="KW-1185">Reference proteome</keyword>
<keyword id="KW-0804">Transcription</keyword>
<keyword id="KW-0805">Transcription regulation</keyword>
<dbReference type="EMBL" id="AY181997">
    <property type="protein sequence ID" value="AAO61583.1"/>
    <property type="molecule type" value="mRNA"/>
</dbReference>
<dbReference type="EMBL" id="AY550302">
    <property type="protein sequence ID" value="AAS58513.1"/>
    <property type="molecule type" value="mRNA"/>
</dbReference>
<dbReference type="EMBL" id="AC069474">
    <property type="protein sequence ID" value="AAG51038.1"/>
    <property type="molecule type" value="Genomic_DNA"/>
</dbReference>
<dbReference type="EMBL" id="AP002055">
    <property type="protein sequence ID" value="BAB02267.1"/>
    <property type="status" value="ALT_SEQ"/>
    <property type="molecule type" value="Genomic_DNA"/>
</dbReference>
<dbReference type="EMBL" id="CP002686">
    <property type="protein sequence ID" value="AEE75213.1"/>
    <property type="molecule type" value="Genomic_DNA"/>
</dbReference>
<dbReference type="EMBL" id="CP002686">
    <property type="protein sequence ID" value="ANM65523.1"/>
    <property type="molecule type" value="Genomic_DNA"/>
</dbReference>
<dbReference type="EMBL" id="BT006452">
    <property type="protein sequence ID" value="AAP21260.1"/>
    <property type="molecule type" value="mRNA"/>
</dbReference>
<dbReference type="EMBL" id="AK227790">
    <property type="protein sequence ID" value="BAE99772.1"/>
    <property type="molecule type" value="mRNA"/>
</dbReference>
<dbReference type="RefSeq" id="NP_001327482.1">
    <property type="nucleotide sequence ID" value="NM_001338001.1"/>
</dbReference>
<dbReference type="RefSeq" id="NP_187862.1">
    <property type="nucleotide sequence ID" value="NM_112091.4"/>
</dbReference>
<dbReference type="SMR" id="Q9C7B1"/>
<dbReference type="BioGRID" id="5770">
    <property type="interactions" value="6"/>
</dbReference>
<dbReference type="FunCoup" id="Q9C7B1">
    <property type="interactions" value="1037"/>
</dbReference>
<dbReference type="STRING" id="3702.Q9C7B1"/>
<dbReference type="PaxDb" id="3702-AT3G12560.1"/>
<dbReference type="ProteomicsDB" id="232408"/>
<dbReference type="EnsemblPlants" id="AT3G12560.1">
    <property type="protein sequence ID" value="AT3G12560.1"/>
    <property type="gene ID" value="AT3G12560"/>
</dbReference>
<dbReference type="EnsemblPlants" id="AT3G12560.2">
    <property type="protein sequence ID" value="AT3G12560.2"/>
    <property type="gene ID" value="AT3G12560"/>
</dbReference>
<dbReference type="GeneID" id="820436"/>
<dbReference type="Gramene" id="AT3G12560.1">
    <property type="protein sequence ID" value="AT3G12560.1"/>
    <property type="gene ID" value="AT3G12560"/>
</dbReference>
<dbReference type="Gramene" id="AT3G12560.2">
    <property type="protein sequence ID" value="AT3G12560.2"/>
    <property type="gene ID" value="AT3G12560"/>
</dbReference>
<dbReference type="KEGG" id="ath:AT3G12560"/>
<dbReference type="Araport" id="AT3G12560"/>
<dbReference type="TAIR" id="AT3G12560">
    <property type="gene designation" value="TRFL9"/>
</dbReference>
<dbReference type="eggNOG" id="ENOG502QS01">
    <property type="taxonomic scope" value="Eukaryota"/>
</dbReference>
<dbReference type="HOGENOM" id="CLU_020710_2_0_1"/>
<dbReference type="InParanoid" id="Q9C7B1"/>
<dbReference type="OMA" id="NAWQREI"/>
<dbReference type="OrthoDB" id="2020981at2759"/>
<dbReference type="PhylomeDB" id="Q9C7B1"/>
<dbReference type="PRO" id="PR:Q9C7B1"/>
<dbReference type="Proteomes" id="UP000006548">
    <property type="component" value="Chromosome 3"/>
</dbReference>
<dbReference type="ExpressionAtlas" id="Q9C7B1">
    <property type="expression patterns" value="baseline and differential"/>
</dbReference>
<dbReference type="GO" id="GO:0005634">
    <property type="term" value="C:nucleus"/>
    <property type="evidence" value="ECO:0007669"/>
    <property type="project" value="UniProtKB-SubCell"/>
</dbReference>
<dbReference type="GO" id="GO:0008301">
    <property type="term" value="F:DNA binding, bending"/>
    <property type="evidence" value="ECO:0000314"/>
    <property type="project" value="TAIR"/>
</dbReference>
<dbReference type="GO" id="GO:0042162">
    <property type="term" value="F:telomeric DNA binding"/>
    <property type="evidence" value="ECO:0000314"/>
    <property type="project" value="TAIR"/>
</dbReference>
<dbReference type="CDD" id="cd11660">
    <property type="entry name" value="SANT_TRF"/>
    <property type="match status" value="1"/>
</dbReference>
<dbReference type="FunFam" id="1.10.246.220:FF:000001">
    <property type="entry name" value="Telomere repeat-binding protein 1"/>
    <property type="match status" value="1"/>
</dbReference>
<dbReference type="Gene3D" id="1.10.246.220">
    <property type="match status" value="1"/>
</dbReference>
<dbReference type="InterPro" id="IPR009057">
    <property type="entry name" value="Homeodomain-like_sf"/>
</dbReference>
<dbReference type="InterPro" id="IPR017930">
    <property type="entry name" value="Myb_dom"/>
</dbReference>
<dbReference type="InterPro" id="IPR001005">
    <property type="entry name" value="SANT/Myb"/>
</dbReference>
<dbReference type="InterPro" id="IPR031105">
    <property type="entry name" value="TRP_plant"/>
</dbReference>
<dbReference type="InterPro" id="IPR029071">
    <property type="entry name" value="Ubiquitin-like_domsf"/>
</dbReference>
<dbReference type="PANTHER" id="PTHR21717:SF80">
    <property type="entry name" value="TELOMERE REPEAT-BINDING PROTEIN 3"/>
    <property type="match status" value="1"/>
</dbReference>
<dbReference type="PANTHER" id="PTHR21717">
    <property type="entry name" value="TELOMERIC REPEAT BINDING PROTEIN"/>
    <property type="match status" value="1"/>
</dbReference>
<dbReference type="Pfam" id="PF23603">
    <property type="entry name" value="Ubiquitin_TPR1"/>
    <property type="match status" value="1"/>
</dbReference>
<dbReference type="SMART" id="SM00717">
    <property type="entry name" value="SANT"/>
    <property type="match status" value="1"/>
</dbReference>
<dbReference type="SUPFAM" id="SSF46689">
    <property type="entry name" value="Homeodomain-like"/>
    <property type="match status" value="1"/>
</dbReference>
<dbReference type="SUPFAM" id="SSF54236">
    <property type="entry name" value="Ubiquitin-like"/>
    <property type="match status" value="1"/>
</dbReference>
<dbReference type="PROSITE" id="PS51294">
    <property type="entry name" value="HTH_MYB"/>
    <property type="match status" value="1"/>
</dbReference>
<gene>
    <name type="primary">TRP3</name>
    <name type="synonym">TBP2</name>
    <name type="synonym">TRFL9</name>
    <name type="ordered locus">At3g12560</name>
    <name type="ORF">T2E22.13</name>
</gene>
<evidence type="ECO:0000255" key="1">
    <source>
        <dbReference type="PROSITE-ProRule" id="PRU00625"/>
    </source>
</evidence>
<evidence type="ECO:0000256" key="2">
    <source>
        <dbReference type="SAM" id="MobiDB-lite"/>
    </source>
</evidence>
<evidence type="ECO:0000269" key="3">
    <source>
    </source>
</evidence>
<evidence type="ECO:0000269" key="4">
    <source>
    </source>
</evidence>
<evidence type="ECO:0000305" key="5"/>
<sequence length="619" mass="68759">MVFKRKLDCLSVGFDFPNIPRAPRSCRRKVLNKRIDHDDDNTQICAIDLLALAGKILQESESSSASSNAFEEIKQEKVENCKTIKSESSDQGNSVSKPTYDISTEKCVVNSCFSFPDSDGVLERTPMSDYKKIHGLMDVGCENKNVNNGFEQGEATDRVGDGGLVTDTCNLEDATALGLQFPKSVCVGGDLKSPSTLDMTPNGSYARHGNHTNLGRKDDDEKFYSYHKLSNKFKSYRSPTIRRIRKSMSSKYWKQVPKDFGYSRADVGVKTLYRKRKSCYGYNAWQREIIYKRRRSPDRSSVVTSDGGLSSGSVSKLPKKGDTVKLSIKSFRIPELFIEVPETATVGSLKRTVMEAVSVLLSGGIRVGVLMHGKKVRDERKTLSQTGISCDENLDNLGFTLEPSPSKVPLPLCSEDPAVPTDPTSLSERSAASPMLDSGIPHADDVIDSRNIVDSNLELVPYQGDISVDEPSSDSKELVPLPELEVKALAIVPLNQKPKRTELAQRRTRRPFSVTEVEALVQAVEELGTGRWRDVKLRAFEDADHRTYVDLKDKWKTLVHTASISPQQRRGEPVPQELLDRVLRAYGYWSQHQGKHQARGASKDPDMNRGGAFESGVSV</sequence>
<comment type="function">
    <text evidence="4">Binds specifically to the plant telomeric double-stranded DNA sequences. At least 2 repeats of telomeric sequences are required for binding. Induces DNA bending.</text>
</comment>
<comment type="subunit">
    <text evidence="3">Homodimer and heterodimer with TRP1.</text>
</comment>
<comment type="subcellular location">
    <subcellularLocation>
        <location evidence="1">Nucleus</location>
    </subcellularLocation>
</comment>
<comment type="tissue specificity">
    <text evidence="3 4">Expressed ubiquitously. Highest expression in flowers and roots.</text>
</comment>
<comment type="sequence caution" evidence="5">
    <conflict type="erroneous gene model prediction">
        <sequence resource="EMBL-CDS" id="BAB02267"/>
    </conflict>
</comment>
<name>TRP3_ARATH</name>
<proteinExistence type="evidence at protein level"/>
<reference key="1">
    <citation type="journal article" date="2005" name="Bot. Bull. Acad. Sin.">
        <title>Functional redundancy of the duplex telomeric DNA-binding proteins in Arabidopsis.</title>
        <authorList>
            <person name="Chen C.M."/>
            <person name="Wang C.T."/>
            <person name="Kao Y.-H."/>
            <person name="Chang G.-D."/>
            <person name="Ho C.-H."/>
            <person name="Lee F.-M."/>
            <person name="Hseu M.-J."/>
        </authorList>
    </citation>
    <scope>NUCLEOTIDE SEQUENCE [MRNA]</scope>
</reference>
<reference key="2">
    <citation type="submission" date="2004-02" db="EMBL/GenBank/DDBJ databases">
        <title>The MYB transcription factor family in Arabidopsis: a genome-wide cloning and expression pattern analysis.</title>
        <authorList>
            <person name="Qu L."/>
            <person name="Gu H."/>
        </authorList>
    </citation>
    <scope>NUCLEOTIDE SEQUENCE [MRNA]</scope>
</reference>
<reference key="3">
    <citation type="journal article" date="2000" name="Nature">
        <title>Sequence and analysis of chromosome 3 of the plant Arabidopsis thaliana.</title>
        <authorList>
            <person name="Salanoubat M."/>
            <person name="Lemcke K."/>
            <person name="Rieger M."/>
            <person name="Ansorge W."/>
            <person name="Unseld M."/>
            <person name="Fartmann B."/>
            <person name="Valle G."/>
            <person name="Bloecker H."/>
            <person name="Perez-Alonso M."/>
            <person name="Obermaier B."/>
            <person name="Delseny M."/>
            <person name="Boutry M."/>
            <person name="Grivell L.A."/>
            <person name="Mache R."/>
            <person name="Puigdomenech P."/>
            <person name="De Simone V."/>
            <person name="Choisne N."/>
            <person name="Artiguenave F."/>
            <person name="Robert C."/>
            <person name="Brottier P."/>
            <person name="Wincker P."/>
            <person name="Cattolico L."/>
            <person name="Weissenbach J."/>
            <person name="Saurin W."/>
            <person name="Quetier F."/>
            <person name="Schaefer M."/>
            <person name="Mueller-Auer S."/>
            <person name="Gabel C."/>
            <person name="Fuchs M."/>
            <person name="Benes V."/>
            <person name="Wurmbach E."/>
            <person name="Drzonek H."/>
            <person name="Erfle H."/>
            <person name="Jordan N."/>
            <person name="Bangert S."/>
            <person name="Wiedelmann R."/>
            <person name="Kranz H."/>
            <person name="Voss H."/>
            <person name="Holland R."/>
            <person name="Brandt P."/>
            <person name="Nyakatura G."/>
            <person name="Vezzi A."/>
            <person name="D'Angelo M."/>
            <person name="Pallavicini A."/>
            <person name="Toppo S."/>
            <person name="Simionati B."/>
            <person name="Conrad A."/>
            <person name="Hornischer K."/>
            <person name="Kauer G."/>
            <person name="Loehnert T.-H."/>
            <person name="Nordsiek G."/>
            <person name="Reichelt J."/>
            <person name="Scharfe M."/>
            <person name="Schoen O."/>
            <person name="Bargues M."/>
            <person name="Terol J."/>
            <person name="Climent J."/>
            <person name="Navarro P."/>
            <person name="Collado C."/>
            <person name="Perez-Perez A."/>
            <person name="Ottenwaelder B."/>
            <person name="Duchemin D."/>
            <person name="Cooke R."/>
            <person name="Laudie M."/>
            <person name="Berger-Llauro C."/>
            <person name="Purnelle B."/>
            <person name="Masuy D."/>
            <person name="de Haan M."/>
            <person name="Maarse A.C."/>
            <person name="Alcaraz J.-P."/>
            <person name="Cottet A."/>
            <person name="Casacuberta E."/>
            <person name="Monfort A."/>
            <person name="Argiriou A."/>
            <person name="Flores M."/>
            <person name="Liguori R."/>
            <person name="Vitale D."/>
            <person name="Mannhaupt G."/>
            <person name="Haase D."/>
            <person name="Schoof H."/>
            <person name="Rudd S."/>
            <person name="Zaccaria P."/>
            <person name="Mewes H.-W."/>
            <person name="Mayer K.F.X."/>
            <person name="Kaul S."/>
            <person name="Town C.D."/>
            <person name="Koo H.L."/>
            <person name="Tallon L.J."/>
            <person name="Jenkins J."/>
            <person name="Rooney T."/>
            <person name="Rizzo M."/>
            <person name="Walts A."/>
            <person name="Utterback T."/>
            <person name="Fujii C.Y."/>
            <person name="Shea T.P."/>
            <person name="Creasy T.H."/>
            <person name="Haas B."/>
            <person name="Maiti R."/>
            <person name="Wu D."/>
            <person name="Peterson J."/>
            <person name="Van Aken S."/>
            <person name="Pai G."/>
            <person name="Militscher J."/>
            <person name="Sellers P."/>
            <person name="Gill J.E."/>
            <person name="Feldblyum T.V."/>
            <person name="Preuss D."/>
            <person name="Lin X."/>
            <person name="Nierman W.C."/>
            <person name="Salzberg S.L."/>
            <person name="White O."/>
            <person name="Venter J.C."/>
            <person name="Fraser C.M."/>
            <person name="Kaneko T."/>
            <person name="Nakamura Y."/>
            <person name="Sato S."/>
            <person name="Kato T."/>
            <person name="Asamizu E."/>
            <person name="Sasamoto S."/>
            <person name="Kimura T."/>
            <person name="Idesawa K."/>
            <person name="Kawashima K."/>
            <person name="Kishida Y."/>
            <person name="Kiyokawa C."/>
            <person name="Kohara M."/>
            <person name="Matsumoto M."/>
            <person name="Matsuno A."/>
            <person name="Muraki A."/>
            <person name="Nakayama S."/>
            <person name="Nakazaki N."/>
            <person name="Shinpo S."/>
            <person name="Takeuchi C."/>
            <person name="Wada T."/>
            <person name="Watanabe A."/>
            <person name="Yamada M."/>
            <person name="Yasuda M."/>
            <person name="Tabata S."/>
        </authorList>
    </citation>
    <scope>NUCLEOTIDE SEQUENCE [LARGE SCALE GENOMIC DNA]</scope>
    <source>
        <strain>cv. Columbia</strain>
    </source>
</reference>
<reference key="4">
    <citation type="journal article" date="2000" name="DNA Res.">
        <title>Structural analysis of Arabidopsis thaliana chromosome 3. II. Sequence features of the 4,251,695 bp regions covered by 90 P1, TAC and BAC clones.</title>
        <authorList>
            <person name="Kaneko T."/>
            <person name="Katoh T."/>
            <person name="Sato S."/>
            <person name="Nakamura Y."/>
            <person name="Asamizu E."/>
            <person name="Tabata S."/>
        </authorList>
    </citation>
    <scope>NUCLEOTIDE SEQUENCE [LARGE SCALE GENOMIC DNA]</scope>
    <source>
        <strain>cv. Columbia</strain>
    </source>
</reference>
<reference key="5">
    <citation type="journal article" date="2017" name="Plant J.">
        <title>Araport11: a complete reannotation of the Arabidopsis thaliana reference genome.</title>
        <authorList>
            <person name="Cheng C.Y."/>
            <person name="Krishnakumar V."/>
            <person name="Chan A.P."/>
            <person name="Thibaud-Nissen F."/>
            <person name="Schobel S."/>
            <person name="Town C.D."/>
        </authorList>
    </citation>
    <scope>GENOME REANNOTATION</scope>
    <source>
        <strain>cv. Columbia</strain>
    </source>
</reference>
<reference key="6">
    <citation type="journal article" date="2003" name="Science">
        <title>Empirical analysis of transcriptional activity in the Arabidopsis genome.</title>
        <authorList>
            <person name="Yamada K."/>
            <person name="Lim J."/>
            <person name="Dale J.M."/>
            <person name="Chen H."/>
            <person name="Shinn P."/>
            <person name="Palm C.J."/>
            <person name="Southwick A.M."/>
            <person name="Wu H.C."/>
            <person name="Kim C.J."/>
            <person name="Nguyen M."/>
            <person name="Pham P.K."/>
            <person name="Cheuk R.F."/>
            <person name="Karlin-Newmann G."/>
            <person name="Liu S.X."/>
            <person name="Lam B."/>
            <person name="Sakano H."/>
            <person name="Wu T."/>
            <person name="Yu G."/>
            <person name="Miranda M."/>
            <person name="Quach H.L."/>
            <person name="Tripp M."/>
            <person name="Chang C.H."/>
            <person name="Lee J.M."/>
            <person name="Toriumi M.J."/>
            <person name="Chan M.M."/>
            <person name="Tang C.C."/>
            <person name="Onodera C.S."/>
            <person name="Deng J.M."/>
            <person name="Akiyama K."/>
            <person name="Ansari Y."/>
            <person name="Arakawa T."/>
            <person name="Banh J."/>
            <person name="Banno F."/>
            <person name="Bowser L."/>
            <person name="Brooks S.Y."/>
            <person name="Carninci P."/>
            <person name="Chao Q."/>
            <person name="Choy N."/>
            <person name="Enju A."/>
            <person name="Goldsmith A.D."/>
            <person name="Gurjal M."/>
            <person name="Hansen N.F."/>
            <person name="Hayashizaki Y."/>
            <person name="Johnson-Hopson C."/>
            <person name="Hsuan V.W."/>
            <person name="Iida K."/>
            <person name="Karnes M."/>
            <person name="Khan S."/>
            <person name="Koesema E."/>
            <person name="Ishida J."/>
            <person name="Jiang P.X."/>
            <person name="Jones T."/>
            <person name="Kawai J."/>
            <person name="Kamiya A."/>
            <person name="Meyers C."/>
            <person name="Nakajima M."/>
            <person name="Narusaka M."/>
            <person name="Seki M."/>
            <person name="Sakurai T."/>
            <person name="Satou M."/>
            <person name="Tamse R."/>
            <person name="Vaysberg M."/>
            <person name="Wallender E.K."/>
            <person name="Wong C."/>
            <person name="Yamamura Y."/>
            <person name="Yuan S."/>
            <person name="Shinozaki K."/>
            <person name="Davis R.W."/>
            <person name="Theologis A."/>
            <person name="Ecker J.R."/>
        </authorList>
    </citation>
    <scope>NUCLEOTIDE SEQUENCE [LARGE SCALE MRNA]</scope>
    <source>
        <strain>cv. Columbia</strain>
    </source>
</reference>
<reference key="7">
    <citation type="submission" date="2006-07" db="EMBL/GenBank/DDBJ databases">
        <title>Large-scale analysis of RIKEN Arabidopsis full-length (RAFL) cDNAs.</title>
        <authorList>
            <person name="Totoki Y."/>
            <person name="Seki M."/>
            <person name="Ishida J."/>
            <person name="Nakajima M."/>
            <person name="Enju A."/>
            <person name="Kamiya A."/>
            <person name="Narusaka M."/>
            <person name="Shin-i T."/>
            <person name="Nakagawa M."/>
            <person name="Sakamoto N."/>
            <person name="Oishi K."/>
            <person name="Kohara Y."/>
            <person name="Kobayashi M."/>
            <person name="Toyoda A."/>
            <person name="Sakaki Y."/>
            <person name="Sakurai T."/>
            <person name="Iida K."/>
            <person name="Akiyama K."/>
            <person name="Satou M."/>
            <person name="Toyoda T."/>
            <person name="Konagaya A."/>
            <person name="Carninci P."/>
            <person name="Kawai J."/>
            <person name="Hayashizaki Y."/>
            <person name="Shinozaki K."/>
        </authorList>
    </citation>
    <scope>NUCLEOTIDE SEQUENCE [LARGE SCALE MRNA]</scope>
    <source>
        <strain>cv. Columbia</strain>
    </source>
</reference>
<reference key="8">
    <citation type="journal article" date="2004" name="J. Biol. Chem.">
        <title>A C-terminal Myb extension domain defines a novel family of double-strand telomeric DNA-binding proteins in Arabidopsis.</title>
        <authorList>
            <person name="Karamysheva Z.N."/>
            <person name="Surovtseva Y.V."/>
            <person name="Vespa L."/>
            <person name="Shakirov E.V."/>
            <person name="Shippen D.E."/>
        </authorList>
    </citation>
    <scope>GENE FAMILY</scope>
    <scope>DNA-BINDING</scope>
    <scope>TISSUE SPECIFICITY</scope>
    <scope>SUBUNIT</scope>
</reference>
<reference key="9">
    <citation type="journal article" date="2005" name="Mol. Genet. Genomics">
        <title>AtTBP2 and AtTRP2 in Arabidopsis encode proteins that bind plant telomeric DNA and induce DNA bending in vitro.</title>
        <authorList>
            <person name="Hwang M.G."/>
            <person name="Kim K."/>
            <person name="Lee W.K."/>
            <person name="Cho M.H."/>
        </authorList>
    </citation>
    <scope>FUNCTION</scope>
    <scope>DNA-BINDING</scope>
    <scope>TISSUE SPECIFICITY</scope>
</reference>
<reference key="10">
    <citation type="journal article" date="2006" name="Plant Mol. Biol.">
        <title>The MYB transcription factor superfamily of Arabidopsis: expression analysis and phylogenetic comparison with the rice MYB family.</title>
        <authorList>
            <person name="Chen Y."/>
            <person name="Yang X."/>
            <person name="He K."/>
            <person name="Liu M."/>
            <person name="Li J."/>
            <person name="Gao Z."/>
            <person name="Lin Z."/>
            <person name="Zhang Y."/>
            <person name="Wang X."/>
            <person name="Qiu X."/>
            <person name="Shen Y."/>
            <person name="Zhang L."/>
            <person name="Deng X."/>
            <person name="Luo J."/>
            <person name="Deng X.-W."/>
            <person name="Chen Z."/>
            <person name="Gu H."/>
            <person name="Qu L.-J."/>
        </authorList>
    </citation>
    <scope>GENE FAMILY</scope>
</reference>